<reference key="1">
    <citation type="journal article" date="2005" name="BMC Biol.">
        <title>The sequence of rice chromosomes 11 and 12, rich in disease resistance genes and recent gene duplications.</title>
        <authorList>
            <consortium name="The rice chromosomes 11 and 12 sequencing consortia"/>
        </authorList>
    </citation>
    <scope>NUCLEOTIDE SEQUENCE [LARGE SCALE GENOMIC DNA]</scope>
    <source>
        <strain>cv. Nipponbare</strain>
    </source>
</reference>
<reference key="2">
    <citation type="journal article" date="2005" name="Nature">
        <title>The map-based sequence of the rice genome.</title>
        <authorList>
            <consortium name="International rice genome sequencing project (IRGSP)"/>
        </authorList>
    </citation>
    <scope>NUCLEOTIDE SEQUENCE [LARGE SCALE GENOMIC DNA]</scope>
    <source>
        <strain>cv. Nipponbare</strain>
    </source>
</reference>
<reference key="3">
    <citation type="journal article" date="2008" name="Nucleic Acids Res.">
        <title>The rice annotation project database (RAP-DB): 2008 update.</title>
        <authorList>
            <consortium name="The rice annotation project (RAP)"/>
        </authorList>
    </citation>
    <scope>GENOME REANNOTATION</scope>
    <source>
        <strain>cv. Nipponbare</strain>
    </source>
</reference>
<reference key="4">
    <citation type="journal article" date="2013" name="Rice">
        <title>Improvement of the Oryza sativa Nipponbare reference genome using next generation sequence and optical map data.</title>
        <authorList>
            <person name="Kawahara Y."/>
            <person name="de la Bastide M."/>
            <person name="Hamilton J.P."/>
            <person name="Kanamori H."/>
            <person name="McCombie W.R."/>
            <person name="Ouyang S."/>
            <person name="Schwartz D.C."/>
            <person name="Tanaka T."/>
            <person name="Wu J."/>
            <person name="Zhou S."/>
            <person name="Childs K.L."/>
            <person name="Davidson R.M."/>
            <person name="Lin H."/>
            <person name="Quesada-Ocampo L."/>
            <person name="Vaillancourt B."/>
            <person name="Sakai H."/>
            <person name="Lee S.S."/>
            <person name="Kim J."/>
            <person name="Numa H."/>
            <person name="Itoh T."/>
            <person name="Buell C.R."/>
            <person name="Matsumoto T."/>
        </authorList>
    </citation>
    <scope>GENOME REANNOTATION</scope>
    <source>
        <strain>cv. Nipponbare</strain>
    </source>
</reference>
<reference key="5">
    <citation type="journal article" date="2005" name="PLoS Biol.">
        <title>The genomes of Oryza sativa: a history of duplications.</title>
        <authorList>
            <person name="Yu J."/>
            <person name="Wang J."/>
            <person name="Lin W."/>
            <person name="Li S."/>
            <person name="Li H."/>
            <person name="Zhou J."/>
            <person name="Ni P."/>
            <person name="Dong W."/>
            <person name="Hu S."/>
            <person name="Zeng C."/>
            <person name="Zhang J."/>
            <person name="Zhang Y."/>
            <person name="Li R."/>
            <person name="Xu Z."/>
            <person name="Li S."/>
            <person name="Li X."/>
            <person name="Zheng H."/>
            <person name="Cong L."/>
            <person name="Lin L."/>
            <person name="Yin J."/>
            <person name="Geng J."/>
            <person name="Li G."/>
            <person name="Shi J."/>
            <person name="Liu J."/>
            <person name="Lv H."/>
            <person name="Li J."/>
            <person name="Wang J."/>
            <person name="Deng Y."/>
            <person name="Ran L."/>
            <person name="Shi X."/>
            <person name="Wang X."/>
            <person name="Wu Q."/>
            <person name="Li C."/>
            <person name="Ren X."/>
            <person name="Wang J."/>
            <person name="Wang X."/>
            <person name="Li D."/>
            <person name="Liu D."/>
            <person name="Zhang X."/>
            <person name="Ji Z."/>
            <person name="Zhao W."/>
            <person name="Sun Y."/>
            <person name="Zhang Z."/>
            <person name="Bao J."/>
            <person name="Han Y."/>
            <person name="Dong L."/>
            <person name="Ji J."/>
            <person name="Chen P."/>
            <person name="Wu S."/>
            <person name="Liu J."/>
            <person name="Xiao Y."/>
            <person name="Bu D."/>
            <person name="Tan J."/>
            <person name="Yang L."/>
            <person name="Ye C."/>
            <person name="Zhang J."/>
            <person name="Xu J."/>
            <person name="Zhou Y."/>
            <person name="Yu Y."/>
            <person name="Zhang B."/>
            <person name="Zhuang S."/>
            <person name="Wei H."/>
            <person name="Liu B."/>
            <person name="Lei M."/>
            <person name="Yu H."/>
            <person name="Li Y."/>
            <person name="Xu H."/>
            <person name="Wei S."/>
            <person name="He X."/>
            <person name="Fang L."/>
            <person name="Zhang Z."/>
            <person name="Zhang Y."/>
            <person name="Huang X."/>
            <person name="Su Z."/>
            <person name="Tong W."/>
            <person name="Li J."/>
            <person name="Tong Z."/>
            <person name="Li S."/>
            <person name="Ye J."/>
            <person name="Wang L."/>
            <person name="Fang L."/>
            <person name="Lei T."/>
            <person name="Chen C.-S."/>
            <person name="Chen H.-C."/>
            <person name="Xu Z."/>
            <person name="Li H."/>
            <person name="Huang H."/>
            <person name="Zhang F."/>
            <person name="Xu H."/>
            <person name="Li N."/>
            <person name="Zhao C."/>
            <person name="Li S."/>
            <person name="Dong L."/>
            <person name="Huang Y."/>
            <person name="Li L."/>
            <person name="Xi Y."/>
            <person name="Qi Q."/>
            <person name="Li W."/>
            <person name="Zhang B."/>
            <person name="Hu W."/>
            <person name="Zhang Y."/>
            <person name="Tian X."/>
            <person name="Jiao Y."/>
            <person name="Liang X."/>
            <person name="Jin J."/>
            <person name="Gao L."/>
            <person name="Zheng W."/>
            <person name="Hao B."/>
            <person name="Liu S.-M."/>
            <person name="Wang W."/>
            <person name="Yuan L."/>
            <person name="Cao M."/>
            <person name="McDermott J."/>
            <person name="Samudrala R."/>
            <person name="Wang J."/>
            <person name="Wong G.K.-S."/>
            <person name="Yang H."/>
        </authorList>
    </citation>
    <scope>NUCLEOTIDE SEQUENCE [LARGE SCALE GENOMIC DNA]</scope>
    <source>
        <strain>cv. Nipponbare</strain>
    </source>
</reference>
<reference key="6">
    <citation type="journal article" date="2003" name="Science">
        <title>Collection, mapping, and annotation of over 28,000 cDNA clones from japonica rice.</title>
        <authorList>
            <consortium name="The rice full-length cDNA consortium"/>
        </authorList>
    </citation>
    <scope>NUCLEOTIDE SEQUENCE [LARGE SCALE MRNA] (ISOFORM 2)</scope>
    <source>
        <strain>cv. Nipponbare</strain>
    </source>
</reference>
<reference key="7">
    <citation type="journal article" date="2009" name="Ann. Bot.">
        <title>Evaluating the microtubule cytoskeleton and its interacting proteins in monocots by mining the rice genome.</title>
        <authorList>
            <person name="Guo L."/>
            <person name="Ho C.M."/>
            <person name="Kong Z."/>
            <person name="Lee Y.R."/>
            <person name="Qian Q."/>
            <person name="Liu B."/>
        </authorList>
    </citation>
    <scope>GENE FAMILY</scope>
    <scope>NOMENCLATURE</scope>
</reference>
<name>KN14O_ORYSJ</name>
<keyword id="KW-0025">Alternative splicing</keyword>
<keyword id="KW-0067">ATP-binding</keyword>
<keyword id="KW-0175">Coiled coil</keyword>
<keyword id="KW-0493">Microtubule</keyword>
<keyword id="KW-0505">Motor protein</keyword>
<keyword id="KW-0547">Nucleotide-binding</keyword>
<keyword id="KW-1185">Reference proteome</keyword>
<comment type="alternative products">
    <event type="alternative splicing"/>
    <isoform>
        <id>B9G2X9-1</id>
        <name>1</name>
        <sequence type="displayed"/>
    </isoform>
    <isoform>
        <id>B9G2X9-2</id>
        <name>2</name>
        <sequence type="described" ref="VSP_058693"/>
    </isoform>
</comment>
<comment type="similarity">
    <text evidence="4">Belongs to the TRAFAC class myosin-kinesin ATPase superfamily. Kinesin family. KIN-14 subfamily.</text>
</comment>
<comment type="sequence caution" evidence="5">
    <conflict type="erroneous gene model prediction">
        <sequence resource="EMBL-CDS" id="BAT15060"/>
    </conflict>
</comment>
<comment type="sequence caution" evidence="5">
    <conflict type="erroneous gene model prediction">
        <sequence resource="EMBL-CDS" id="EEE69476"/>
    </conflict>
</comment>
<dbReference type="EMBL" id="DP000010">
    <property type="protein sequence ID" value="ABA95119.2"/>
    <property type="molecule type" value="Genomic_DNA"/>
</dbReference>
<dbReference type="EMBL" id="AP008217">
    <property type="protein sequence ID" value="BAH95410.1"/>
    <property type="molecule type" value="Genomic_DNA"/>
</dbReference>
<dbReference type="EMBL" id="AP014967">
    <property type="protein sequence ID" value="BAT15060.1"/>
    <property type="status" value="ALT_SEQ"/>
    <property type="molecule type" value="Genomic_DNA"/>
</dbReference>
<dbReference type="EMBL" id="CM000146">
    <property type="protein sequence ID" value="EEE69476.1"/>
    <property type="status" value="ALT_SEQ"/>
    <property type="molecule type" value="Genomic_DNA"/>
</dbReference>
<dbReference type="EMBL" id="AK071093">
    <property type="protein sequence ID" value="BAG92306.1"/>
    <property type="molecule type" value="mRNA"/>
</dbReference>
<dbReference type="RefSeq" id="XP_015615155.1">
    <property type="nucleotide sequence ID" value="XM_015759669.1"/>
</dbReference>
<dbReference type="SMR" id="B9G2X9"/>
<dbReference type="FunCoup" id="B9G2X9">
    <property type="interactions" value="206"/>
</dbReference>
<dbReference type="STRING" id="39947.B9G2X9"/>
<dbReference type="PaxDb" id="39947-B9G2X9"/>
<dbReference type="KEGG" id="dosa:Os11g0648100"/>
<dbReference type="eggNOG" id="KOG0239">
    <property type="taxonomic scope" value="Eukaryota"/>
</dbReference>
<dbReference type="InParanoid" id="B9G2X9"/>
<dbReference type="OrthoDB" id="3176171at2759"/>
<dbReference type="Proteomes" id="UP000000763">
    <property type="component" value="Chromosome 11"/>
</dbReference>
<dbReference type="Proteomes" id="UP000007752">
    <property type="component" value="Chromosome 9"/>
</dbReference>
<dbReference type="Proteomes" id="UP000059680">
    <property type="component" value="Chromosome 11"/>
</dbReference>
<dbReference type="GO" id="GO:0005737">
    <property type="term" value="C:cytoplasm"/>
    <property type="evidence" value="ECO:0000318"/>
    <property type="project" value="GO_Central"/>
</dbReference>
<dbReference type="GO" id="GO:0005871">
    <property type="term" value="C:kinesin complex"/>
    <property type="evidence" value="ECO:0000318"/>
    <property type="project" value="GO_Central"/>
</dbReference>
<dbReference type="GO" id="GO:0005874">
    <property type="term" value="C:microtubule"/>
    <property type="evidence" value="ECO:0000318"/>
    <property type="project" value="GO_Central"/>
</dbReference>
<dbReference type="GO" id="GO:0005524">
    <property type="term" value="F:ATP binding"/>
    <property type="evidence" value="ECO:0007669"/>
    <property type="project" value="UniProtKB-KW"/>
</dbReference>
<dbReference type="GO" id="GO:0016887">
    <property type="term" value="F:ATP hydrolysis activity"/>
    <property type="evidence" value="ECO:0000318"/>
    <property type="project" value="GO_Central"/>
</dbReference>
<dbReference type="GO" id="GO:0008017">
    <property type="term" value="F:microtubule binding"/>
    <property type="evidence" value="ECO:0000318"/>
    <property type="project" value="GO_Central"/>
</dbReference>
<dbReference type="GO" id="GO:0003777">
    <property type="term" value="F:microtubule motor activity"/>
    <property type="evidence" value="ECO:0000318"/>
    <property type="project" value="GO_Central"/>
</dbReference>
<dbReference type="GO" id="GO:0007018">
    <property type="term" value="P:microtubule-based movement"/>
    <property type="evidence" value="ECO:0000318"/>
    <property type="project" value="GO_Central"/>
</dbReference>
<dbReference type="GO" id="GO:0051225">
    <property type="term" value="P:spindle assembly"/>
    <property type="evidence" value="ECO:0000318"/>
    <property type="project" value="GO_Central"/>
</dbReference>
<dbReference type="FunFam" id="3.40.850.10:FF:000074">
    <property type="entry name" value="p-loop containing nucleoside triphosphate hydrolase superfamily protein"/>
    <property type="match status" value="1"/>
</dbReference>
<dbReference type="Gene3D" id="3.40.850.10">
    <property type="entry name" value="Kinesin motor domain"/>
    <property type="match status" value="1"/>
</dbReference>
<dbReference type="InterPro" id="IPR027640">
    <property type="entry name" value="Kinesin-like_fam"/>
</dbReference>
<dbReference type="InterPro" id="IPR001752">
    <property type="entry name" value="Kinesin_motor_dom"/>
</dbReference>
<dbReference type="InterPro" id="IPR036961">
    <property type="entry name" value="Kinesin_motor_dom_sf"/>
</dbReference>
<dbReference type="InterPro" id="IPR027417">
    <property type="entry name" value="P-loop_NTPase"/>
</dbReference>
<dbReference type="PANTHER" id="PTHR47972:SF9">
    <property type="entry name" value="KINESIN-LIKE PROTEIN KIN-14U"/>
    <property type="match status" value="1"/>
</dbReference>
<dbReference type="PANTHER" id="PTHR47972">
    <property type="entry name" value="KINESIN-LIKE PROTEIN KLP-3"/>
    <property type="match status" value="1"/>
</dbReference>
<dbReference type="Pfam" id="PF00225">
    <property type="entry name" value="Kinesin"/>
    <property type="match status" value="1"/>
</dbReference>
<dbReference type="PRINTS" id="PR00380">
    <property type="entry name" value="KINESINHEAVY"/>
</dbReference>
<dbReference type="SMART" id="SM00129">
    <property type="entry name" value="KISc"/>
    <property type="match status" value="1"/>
</dbReference>
<dbReference type="SUPFAM" id="SSF52540">
    <property type="entry name" value="P-loop containing nucleoside triphosphate hydrolases"/>
    <property type="match status" value="1"/>
</dbReference>
<dbReference type="PROSITE" id="PS50067">
    <property type="entry name" value="KINESIN_MOTOR_2"/>
    <property type="match status" value="1"/>
</dbReference>
<evidence type="ECO:0000255" key="1"/>
<evidence type="ECO:0000255" key="2">
    <source>
        <dbReference type="PROSITE-ProRule" id="PRU00283"/>
    </source>
</evidence>
<evidence type="ECO:0000256" key="3">
    <source>
        <dbReference type="SAM" id="MobiDB-lite"/>
    </source>
</evidence>
<evidence type="ECO:0000303" key="4">
    <source>
    </source>
</evidence>
<evidence type="ECO:0000305" key="5"/>
<evidence type="ECO:0000312" key="6">
    <source>
        <dbReference type="EMBL" id="ABA95119.2"/>
    </source>
</evidence>
<evidence type="ECO:0000312" key="7">
    <source>
        <dbReference type="EMBL" id="BAT15060.1"/>
    </source>
</evidence>
<evidence type="ECO:0000312" key="8">
    <source>
        <dbReference type="EMBL" id="EEE69476.1"/>
    </source>
</evidence>
<organism>
    <name type="scientific">Oryza sativa subsp. japonica</name>
    <name type="common">Rice</name>
    <dbReference type="NCBI Taxonomy" id="39947"/>
    <lineage>
        <taxon>Eukaryota</taxon>
        <taxon>Viridiplantae</taxon>
        <taxon>Streptophyta</taxon>
        <taxon>Embryophyta</taxon>
        <taxon>Tracheophyta</taxon>
        <taxon>Spermatophyta</taxon>
        <taxon>Magnoliopsida</taxon>
        <taxon>Liliopsida</taxon>
        <taxon>Poales</taxon>
        <taxon>Poaceae</taxon>
        <taxon>BOP clade</taxon>
        <taxon>Oryzoideae</taxon>
        <taxon>Oryzeae</taxon>
        <taxon>Oryzinae</taxon>
        <taxon>Oryza</taxon>
        <taxon>Oryza sativa</taxon>
    </lineage>
</organism>
<protein>
    <recommendedName>
        <fullName evidence="5">Kinesin-like protein KIN-14O</fullName>
    </recommendedName>
</protein>
<accession>B9G2X9</accession>
<accession>A0A0P0Y4U9</accession>
<accession>Q2R0E8</accession>
<proteinExistence type="evidence at transcript level"/>
<gene>
    <name evidence="5" type="primary">KIN14O</name>
    <name evidence="7" type="ordered locus">Os11g0648100</name>
    <name evidence="6" type="ordered locus">LOC_Os11g42800</name>
    <name evidence="8" type="ORF">OsJ_28899</name>
</gene>
<feature type="chain" id="PRO_0000438640" description="Kinesin-like protein KIN-14O">
    <location>
        <begin position="1"/>
        <end position="604"/>
    </location>
</feature>
<feature type="domain" description="Kinesin motor" evidence="2">
    <location>
        <begin position="63"/>
        <end position="387"/>
    </location>
</feature>
<feature type="region of interest" description="Disordered" evidence="3">
    <location>
        <begin position="465"/>
        <end position="511"/>
    </location>
</feature>
<feature type="region of interest" description="Disordered" evidence="3">
    <location>
        <begin position="565"/>
        <end position="604"/>
    </location>
</feature>
<feature type="coiled-coil region" evidence="1">
    <location>
        <begin position="22"/>
        <end position="61"/>
    </location>
</feature>
<feature type="coiled-coil region" evidence="1">
    <location>
        <begin position="383"/>
        <end position="443"/>
    </location>
</feature>
<feature type="compositionally biased region" description="Polar residues" evidence="3">
    <location>
        <begin position="565"/>
        <end position="574"/>
    </location>
</feature>
<feature type="compositionally biased region" description="Basic residues" evidence="3">
    <location>
        <begin position="593"/>
        <end position="604"/>
    </location>
</feature>
<feature type="binding site" evidence="2">
    <location>
        <begin position="141"/>
        <end position="148"/>
    </location>
    <ligand>
        <name>ATP</name>
        <dbReference type="ChEBI" id="CHEBI:30616"/>
    </ligand>
</feature>
<feature type="splice variant" id="VSP_058693" description="In isoform 2.">
    <original>MEGHVIVPLEKLSLELNNGGIMLNHDKDISALQEEISALRSRQRHLDHRRQEALDKLIDLKGSIRVFCRVRPSISANNFMTKSPVTVENEKIVVRAVGIKKEFSVDRVFDQESTQEDVFQEVKPILRSALDGHNVCILAYGQTGTGKTYTMEGNNGKLGIVPRAIQELFSHASQDSSSTYSFSISMLEVYMGTVRDLLTPRQPLFRSTECNTSSIISILATKSGAVEVEGLTDVAIQDLKKANQWYCRGRRARSTSWTNVNDVSSRSHC</original>
    <variation>MLQFKTSRRPTSGTAEDGVHGRRLGQMLTMFRVDRIALFVCS</variation>
    <location>
        <begin position="1"/>
        <end position="269"/>
    </location>
</feature>
<sequence length="604" mass="66637">MEGHVIVPLEKLSLELNNGGIMLNHDKDISALQEEISALRSRQRHLDHRRQEALDKLIDLKGSIRVFCRVRPSISANNFMTKSPVTVENEKIVVRAVGIKKEFSVDRVFDQESTQEDVFQEVKPILRSALDGHNVCILAYGQTGTGKTYTMEGNNGKLGIVPRAIQELFSHASQDSSSTYSFSISMLEVYMGTVRDLLTPRQPLFRSTECNTSSIISILATKSGAVEVEGLTDVAIQDLKKANQWYCRGRRARSTSWTNVNDVSSRSHCLTRITIKRSSGGTTEECSKLWLVDLGGSERLLKTGASGLTMDEGKAINLSLSALGDVIAALRRKRSHVPYRNSKLTQILSDSLGDGSKVLMVVHISPSDDDIGETVCSLSFAKRARSIESSKELSEDIKKLKQKRIAELDKEICDAEQELKDLNEQIKRAETSLEERKKLSSSACQALSDEKGSPRSTLVVVGHIDSAESPQATEKTKSRASHGSVPHFMSPTVCSRQRHSSASHSATKTRLTKSVNRYPAAELSGSHSFSYSSCKNAAKARSVAFSSSMPKMKCLPLKSDQINMSNNSIDSTAASAPRRRESFISRPAQRAPLHQHRRRMSSLT</sequence>